<sequence>MKTFSESHKTVFVVDHCPYMSESCRQHVEFDMLTKNRTQGIIPLAPISKSLWTCAIEASMEYCRIMYDIFPFRKLVNFIVSDSGSRTLNSWNQEDQNLQELMAALAVIGPPNPRADPECCSILHGLVEAVESLCKITDYQHESRTELMENADRVANRGRIICITNAKSDSHVQMLEDCVNETIHEHNKLAAGSDHLMQIQKCHLVLIHTYPVGEDSLVSDRPKKELSNVLISEVHSVKAGRHLSTKLNQLVQLHFDLASTTITNIPMKEEQHANTSANYDVELLHHKEAHVEFNKSAGEGYNGSSSRENCLKETVTLKWCTPRTNSVELHYCTGAFRISPVDVNSRPSSCLTNFLLNGRSVLLEQPRKSGSKVISHMLSSHGGEIFLHVLSSSRSILEDPPSISEGCGGRVTDYRITDFGEFMRENRLMPFAEPRYCMDGGPEVPLERAKEQLERHTRYWPMIISQTTIFNMQAVVPLASVIVKESLSEEDVLNCQKTIYNLVDMERKNDPLPISTAGTRGKGPKRDEQYRIMWNELETLVRAHVRGSDRHQRVMDCLMACRSKPPEEEERKKRGRKREDKEEKAEKPPKENEHEKKWQESERVKSVLDREKEDLAEAEVIKDSPDSPEPPNKKPHIMVEDTGPAEKSKGPMSLLSLWSSRINTANSRKHQEFVGRLNSVNNKAELYQHLKEENGAEGVENGKGSRQ</sequence>
<organism>
    <name type="scientific">Xenopus tropicalis</name>
    <name type="common">Western clawed frog</name>
    <name type="synonym">Silurana tropicalis</name>
    <dbReference type="NCBI Taxonomy" id="8364"/>
    <lineage>
        <taxon>Eukaryota</taxon>
        <taxon>Metazoa</taxon>
        <taxon>Chordata</taxon>
        <taxon>Craniata</taxon>
        <taxon>Vertebrata</taxon>
        <taxon>Euteleostomi</taxon>
        <taxon>Amphibia</taxon>
        <taxon>Batrachia</taxon>
        <taxon>Anura</taxon>
        <taxon>Pipoidea</taxon>
        <taxon>Pipidae</taxon>
        <taxon>Xenopodinae</taxon>
        <taxon>Xenopus</taxon>
        <taxon>Silurana</taxon>
    </lineage>
</organism>
<evidence type="ECO:0000250" key="1">
    <source>
        <dbReference type="UniProtKB" id="Q6GLY5"/>
    </source>
</evidence>
<evidence type="ECO:0000250" key="2">
    <source>
        <dbReference type="UniProtKB" id="Q9NVM9"/>
    </source>
</evidence>
<evidence type="ECO:0000255" key="3"/>
<evidence type="ECO:0000256" key="4">
    <source>
        <dbReference type="SAM" id="MobiDB-lite"/>
    </source>
</evidence>
<evidence type="ECO:0000305" key="5"/>
<evidence type="ECO:0000312" key="6">
    <source>
        <dbReference type="EMBL" id="AAH75538.1"/>
    </source>
</evidence>
<evidence type="ECO:0000312" key="7">
    <source>
        <dbReference type="EMBL" id="CAJ83879.1"/>
    </source>
</evidence>
<dbReference type="EMBL" id="CR761707">
    <property type="protein sequence ID" value="CAJ83879.1"/>
    <property type="molecule type" value="mRNA"/>
</dbReference>
<dbReference type="EMBL" id="BC075538">
    <property type="protein sequence ID" value="AAH75538.1"/>
    <property type="molecule type" value="mRNA"/>
</dbReference>
<dbReference type="RefSeq" id="NP_001004984.1">
    <property type="nucleotide sequence ID" value="NM_001004984.1"/>
</dbReference>
<dbReference type="RefSeq" id="XP_031753694.1">
    <property type="nucleotide sequence ID" value="XM_031897834.1"/>
</dbReference>
<dbReference type="SMR" id="Q6DIK0"/>
<dbReference type="FunCoup" id="Q6DIK0">
    <property type="interactions" value="4380"/>
</dbReference>
<dbReference type="PaxDb" id="8364-ENSXETP00000035984"/>
<dbReference type="DNASU" id="448436"/>
<dbReference type="GeneID" id="448436"/>
<dbReference type="KEGG" id="xtr:448436"/>
<dbReference type="AGR" id="Xenbase:XB-GENE-997276"/>
<dbReference type="CTD" id="55726"/>
<dbReference type="Xenbase" id="XB-GENE-997276">
    <property type="gene designation" value="ints13"/>
</dbReference>
<dbReference type="eggNOG" id="KOG3711">
    <property type="taxonomic scope" value="Eukaryota"/>
</dbReference>
<dbReference type="InParanoid" id="Q6DIK0"/>
<dbReference type="OrthoDB" id="5844105at2759"/>
<dbReference type="Reactome" id="R-XTR-6807505">
    <property type="pathway name" value="RNA polymerase II transcribes snRNA genes"/>
</dbReference>
<dbReference type="Proteomes" id="UP000008143">
    <property type="component" value="Chromosome 3"/>
</dbReference>
<dbReference type="GO" id="GO:0005737">
    <property type="term" value="C:cytoplasm"/>
    <property type="evidence" value="ECO:0000250"/>
    <property type="project" value="UniProtKB"/>
</dbReference>
<dbReference type="GO" id="GO:0160232">
    <property type="term" value="C:INTAC complex"/>
    <property type="evidence" value="ECO:0000250"/>
    <property type="project" value="UniProtKB"/>
</dbReference>
<dbReference type="GO" id="GO:0005634">
    <property type="term" value="C:nucleus"/>
    <property type="evidence" value="ECO:0000250"/>
    <property type="project" value="UniProtKB"/>
</dbReference>
<dbReference type="GO" id="GO:0051301">
    <property type="term" value="P:cell division"/>
    <property type="evidence" value="ECO:0007669"/>
    <property type="project" value="UniProtKB-KW"/>
</dbReference>
<dbReference type="GO" id="GO:0030317">
    <property type="term" value="P:flagellated sperm motility"/>
    <property type="evidence" value="ECO:0000250"/>
    <property type="project" value="UniProtKB"/>
</dbReference>
<dbReference type="GO" id="GO:0080154">
    <property type="term" value="P:regulation of fertilization"/>
    <property type="evidence" value="ECO:0000250"/>
    <property type="project" value="UniProtKB"/>
</dbReference>
<dbReference type="GO" id="GO:0007346">
    <property type="term" value="P:regulation of mitotic cell cycle"/>
    <property type="evidence" value="ECO:0000250"/>
    <property type="project" value="UniProtKB"/>
</dbReference>
<dbReference type="GO" id="GO:0160240">
    <property type="term" value="P:RNA polymerase II transcription initiation surveillance"/>
    <property type="evidence" value="ECO:0000250"/>
    <property type="project" value="UniProtKB"/>
</dbReference>
<dbReference type="InterPro" id="IPR019355">
    <property type="entry name" value="Cell_cycle_regulator_Mat89Bb"/>
</dbReference>
<dbReference type="PANTHER" id="PTHR12955:SF1">
    <property type="entry name" value="INTEGRATOR COMPLEX SUBUNIT 13"/>
    <property type="match status" value="1"/>
</dbReference>
<dbReference type="PANTHER" id="PTHR12955">
    <property type="entry name" value="SARCOMA ANTIGEN NY-SAR-95-RELATED"/>
    <property type="match status" value="1"/>
</dbReference>
<dbReference type="Pfam" id="PF10221">
    <property type="entry name" value="Mat89Bb"/>
    <property type="match status" value="1"/>
</dbReference>
<keyword id="KW-0131">Cell cycle</keyword>
<keyword id="KW-0132">Cell division</keyword>
<keyword id="KW-0175">Coiled coil</keyword>
<keyword id="KW-0963">Cytoplasm</keyword>
<keyword id="KW-0217">Developmental protein</keyword>
<keyword id="KW-0498">Mitosis</keyword>
<keyword id="KW-0539">Nucleus</keyword>
<keyword id="KW-1185">Reference proteome</keyword>
<name>INT13_XENTR</name>
<proteinExistence type="evidence at transcript level"/>
<accession>Q6DIK0</accession>
<protein>
    <recommendedName>
        <fullName evidence="2">Integrator complex subunit 13</fullName>
    </recommendedName>
    <alternativeName>
        <fullName evidence="1 2">Cell cycle regulator Mat89Bb homolog</fullName>
    </alternativeName>
    <alternativeName>
        <fullName>Germ cell tumor 1</fullName>
    </alternativeName>
    <alternativeName>
        <fullName evidence="5">Protein asunder homolog</fullName>
    </alternativeName>
    <alternativeName>
        <fullName>Sarcoma antigen NY-SAR-95</fullName>
    </alternativeName>
</protein>
<reference evidence="7" key="1">
    <citation type="submission" date="2006-10" db="EMBL/GenBank/DDBJ databases">
        <authorList>
            <consortium name="Sanger Xenopus tropicalis EST/cDNA project"/>
        </authorList>
    </citation>
    <scope>NUCLEOTIDE SEQUENCE [LARGE SCALE MRNA]</scope>
    <source>
        <tissue evidence="7">Gastrula</tissue>
    </source>
</reference>
<reference evidence="7" key="2">
    <citation type="submission" date="2004-06" db="EMBL/GenBank/DDBJ databases">
        <authorList>
            <consortium name="NIH - Xenopus Gene Collection (XGC) project"/>
        </authorList>
    </citation>
    <scope>NUCLEOTIDE SEQUENCE [LARGE SCALE MRNA]</scope>
    <source>
        <tissue evidence="6">Neurula</tissue>
    </source>
</reference>
<feature type="chain" id="PRO_0000389515" description="Integrator complex subunit 13">
    <location>
        <begin position="1"/>
        <end position="707"/>
    </location>
</feature>
<feature type="region of interest" description="Disordered" evidence="4">
    <location>
        <begin position="565"/>
        <end position="651"/>
    </location>
</feature>
<feature type="region of interest" description="Cleavage module binding motif (CMBM)" evidence="2">
    <location>
        <begin position="650"/>
        <end position="695"/>
    </location>
</feature>
<feature type="coiled-coil region" evidence="3">
    <location>
        <begin position="567"/>
        <end position="622"/>
    </location>
</feature>
<feature type="short sequence motif" description="Nuclear localization signal (NLS)" evidence="2">
    <location>
        <begin position="573"/>
        <end position="583"/>
    </location>
</feature>
<feature type="compositionally biased region" description="Basic and acidic residues" evidence="4">
    <location>
        <begin position="565"/>
        <end position="625"/>
    </location>
</feature>
<gene>
    <name evidence="2" type="primary">ints13</name>
    <name evidence="2" type="synonym">asun</name>
    <name type="synonym">mat89bb</name>
    <name type="ORF">TGas007o21.1</name>
</gene>
<comment type="function">
    <text evidence="2">Component of the integrator complex, a multiprotein complex that terminates RNA polymerase II (Pol II) transcription in the promoter-proximal region of genes. The integrator complex provides a quality checkpoint during transcription elongation by driving premature transcription termination of transcripts that are unfavorably configured for transcriptional elongation: the complex terminates transcription by (1) catalyzing dephosphorylation of the C-terminal domain (CTD) of Pol II subunit POLR2A/RPB1 and SUPT5H/SPT5, (2) degrading the exiting nascent RNA transcript via endonuclease activity and (3) promoting the release of Pol II from bound DNA. The integrator complex is also involved in terminating the synthesis of non-coding Pol II transcripts, such as enhancer RNAs (eRNAs), small nuclear RNAs (snRNAs), telomerase RNAs and long non-coding RNAs (lncRNAs). Within the integrator complex, INTS13 is part of the integrator tail module and acts as a platform for the recruitment of transcription factors at promoters.</text>
</comment>
<comment type="subunit">
    <text evidence="2">Component of the Integrator complex, composed of core subunits INTS1, INTS2, INTS3, INTS4, INTS5, INTS6, INTS7, INTS8, INTS9/RC74, INTS10, INTS11/CPSF3L, INTS12, INTS13, INTS14 and INTS15. The core complex associates with protein phosphatase 2A subunits PPP2CA and PPP2R1A, to form the Integrator-PP2A (INTAC) complex. INTS13 is part of the tail subcomplex, composed of INTS10, INTS13, INTS14 and INTS15.</text>
</comment>
<comment type="subcellular location">
    <subcellularLocation>
        <location evidence="2">Nucleus</location>
    </subcellularLocation>
    <subcellularLocation>
        <location evidence="2">Cytoplasm</location>
    </subcellularLocation>
    <text evidence="2">Nuclear location is required for recruitment of dynein motors to nuclear envelope at G2/M.</text>
</comment>
<comment type="domain">
    <text evidence="2">The cleavage module binding motif (CMBM) mediates recruitment of transcription factors.</text>
</comment>
<comment type="similarity">
    <text evidence="5">Belongs to the Integrator subunit 13 family.</text>
</comment>